<evidence type="ECO:0000255" key="1">
    <source>
        <dbReference type="HAMAP-Rule" id="MF_04030"/>
    </source>
</evidence>
<evidence type="ECO:0000256" key="2">
    <source>
        <dbReference type="SAM" id="MobiDB-lite"/>
    </source>
</evidence>
<evidence type="ECO:0000305" key="3"/>
<evidence type="ECO:0000312" key="4">
    <source>
        <dbReference type="EMBL" id="AAS45941.1"/>
    </source>
</evidence>
<sequence length="881" mass="99481">MESADILPGSRGTVDRRCEGSEEKITPPRPVEDFNPQLFPNEVYLNFTSMHGIQPVVARIRELSRKTVSAAMVPPLEWFERLPRLETPLDIEPLHLPFSVYLISGNAGSGKSTCIQTLNETMDCVITGATRVAAQNVYTKLSSAFATRHINTIFQEFGFRGNHVQAQLGKYQYSCSSSPPPIEELQKRDIVYYWEVLVDITRRLFESTASRGEFENIRALERLLGRAPGSLTRLAFCTNGSLPAFTRTNIVIIDEAGLLGRHLLTVVVYCWWMLNAAYKSPQYAEGKVPVIVCVGSPTQTDSLESRFEHKNLKCHVRSSENVLTHIITNRTIREYVSLSTNWAIFINNKRCQEYEFGELMKVLEYGLPITEEHMRLVDTFVVPEAYINNPANLPGWTRLYSSHKEVSAYMAKLHAHLKVSGERQFVVFTLPAYTFVKTAAFDEYKKITQQPSLSLDKWLAANASRVSNYSQSRDQDAGKTQCEYYSEHGVVVARTDVTYVLNSQVSVTTRMRKFVFGFSGTFETFDAVLKDDAFIKTQGETSVEYAYRFLSTLLFSGMINFYNFLKRPGLDEGRVREAYRRMAALTAKLIPGASVLESACDNPSGAPLNFRGLTDPPGFTGGTTNDWDDDNDVVFAALNEGAIDMLYCNYEFVRPETTQEVYSQFLMLKTMFVGRYSIFMDLFGGDFESSPFDTFVDNISYKGCEIFVGSMRGGVSSIALQTDSYTLMGYTSAPVYPFVEELARRKLHEGIAELFGAMNMPRMVLRDQHGFMSVLNVNLSEFVESVDDVELDMATAVDYGLSSRLAMTIARSQGLSLDKVAICFPRNNLRINSVYVAMSRTVSSRFLRMNLNPLRERHERDTVISEHILAALRDRDVQIVY</sequence>
<name>HELI_EHV1V</name>
<reference evidence="3 4" key="1">
    <citation type="submission" date="2003-11" db="EMBL/GenBank/DDBJ databases">
        <authorList>
            <person name="Davis-Poynter N."/>
            <person name="Nugent J."/>
            <person name="Birch-Machin I."/>
            <person name="Allen G.P."/>
        </authorList>
    </citation>
    <scope>NUCLEOTIDE SEQUENCE [LARGE SCALE GENOMIC DNA]</scope>
</reference>
<protein>
    <recommendedName>
        <fullName evidence="1">DNA replication helicase</fullName>
        <ecNumber evidence="1">3.6.4.-</ecNumber>
    </recommendedName>
</protein>
<dbReference type="EC" id="3.6.4.-" evidence="1"/>
<dbReference type="EMBL" id="AY464052">
    <property type="protein sequence ID" value="AAS45941.1"/>
    <property type="molecule type" value="Genomic_DNA"/>
</dbReference>
<dbReference type="Proteomes" id="UP000008296">
    <property type="component" value="Segment"/>
</dbReference>
<dbReference type="GO" id="GO:0042025">
    <property type="term" value="C:host cell nucleus"/>
    <property type="evidence" value="ECO:0007669"/>
    <property type="project" value="UniProtKB-SubCell"/>
</dbReference>
<dbReference type="GO" id="GO:0005524">
    <property type="term" value="F:ATP binding"/>
    <property type="evidence" value="ECO:0007669"/>
    <property type="project" value="UniProtKB-KW"/>
</dbReference>
<dbReference type="GO" id="GO:0004386">
    <property type="term" value="F:helicase activity"/>
    <property type="evidence" value="ECO:0007669"/>
    <property type="project" value="UniProtKB-KW"/>
</dbReference>
<dbReference type="GO" id="GO:0016787">
    <property type="term" value="F:hydrolase activity"/>
    <property type="evidence" value="ECO:0007669"/>
    <property type="project" value="UniProtKB-KW"/>
</dbReference>
<dbReference type="GO" id="GO:0006260">
    <property type="term" value="P:DNA replication"/>
    <property type="evidence" value="ECO:0007669"/>
    <property type="project" value="UniProtKB-KW"/>
</dbReference>
<dbReference type="Gene3D" id="3.40.50.300">
    <property type="entry name" value="P-loop containing nucleotide triphosphate hydrolases"/>
    <property type="match status" value="1"/>
</dbReference>
<dbReference type="HAMAP" id="MF_04030">
    <property type="entry name" value="HSV_HELI"/>
    <property type="match status" value="1"/>
</dbReference>
<dbReference type="InterPro" id="IPR003840">
    <property type="entry name" value="DNA_helicase_dom"/>
</dbReference>
<dbReference type="InterPro" id="IPR034711">
    <property type="entry name" value="HSV_HELI"/>
</dbReference>
<dbReference type="InterPro" id="IPR027417">
    <property type="entry name" value="P-loop_NTPase"/>
</dbReference>
<dbReference type="Pfam" id="PF02689">
    <property type="entry name" value="Herpes_Helicase"/>
    <property type="match status" value="1"/>
</dbReference>
<dbReference type="SUPFAM" id="SSF52540">
    <property type="entry name" value="P-loop containing nucleoside triphosphate hydrolases"/>
    <property type="match status" value="2"/>
</dbReference>
<accession>Q6S6U7</accession>
<organismHost>
    <name type="scientific">Equus caballus</name>
    <name type="common">Horse</name>
    <dbReference type="NCBI Taxonomy" id="9796"/>
</organismHost>
<comment type="function">
    <text evidence="1">Component of the helicase/primase complex. Unwinds the DNA at the replication forks and generates single-stranded DNA for both leading and lagging strand synthesis. The primase synthesizes short RNA primers on the lagging strand that the polymerase elongates using dNTPs. Possesses helicase-like motifs and therefore may act as the helicase subunit of the complex.</text>
</comment>
<comment type="subunit">
    <text evidence="1">Associates with the primase and the primase-associated factor to form the helicase-primase complex.</text>
</comment>
<comment type="subcellular location">
    <subcellularLocation>
        <location evidence="1">Host nucleus</location>
    </subcellularLocation>
</comment>
<comment type="similarity">
    <text evidence="1">Belongs to the herpesviridae helicase family.</text>
</comment>
<keyword id="KW-0067">ATP-binding</keyword>
<keyword id="KW-0235">DNA replication</keyword>
<keyword id="KW-0347">Helicase</keyword>
<keyword id="KW-1048">Host nucleus</keyword>
<keyword id="KW-0378">Hydrolase</keyword>
<keyword id="KW-0547">Nucleotide-binding</keyword>
<feature type="chain" id="PRO_0000115848" description="DNA replication helicase">
    <location>
        <begin position="1"/>
        <end position="881"/>
    </location>
</feature>
<feature type="region of interest" description="Disordered" evidence="2">
    <location>
        <begin position="1"/>
        <end position="32"/>
    </location>
</feature>
<feature type="compositionally biased region" description="Basic and acidic residues" evidence="2">
    <location>
        <begin position="13"/>
        <end position="32"/>
    </location>
</feature>
<feature type="binding site" evidence="1">
    <location>
        <begin position="105"/>
        <end position="112"/>
    </location>
    <ligand>
        <name>ATP</name>
        <dbReference type="ChEBI" id="CHEBI:30616"/>
    </ligand>
</feature>
<proteinExistence type="inferred from homology"/>
<organism>
    <name type="scientific">Equine herpesvirus 1 (strain V592)</name>
    <name type="common">EHV-1</name>
    <name type="synonym">Equine abortion virus</name>
    <dbReference type="NCBI Taxonomy" id="310273"/>
    <lineage>
        <taxon>Viruses</taxon>
        <taxon>Duplodnaviria</taxon>
        <taxon>Heunggongvirae</taxon>
        <taxon>Peploviricota</taxon>
        <taxon>Herviviricetes</taxon>
        <taxon>Herpesvirales</taxon>
        <taxon>Orthoherpesviridae</taxon>
        <taxon>Alphaherpesvirinae</taxon>
        <taxon>Varicellovirus</taxon>
        <taxon>Varicellovirus equidalpha1</taxon>
        <taxon>Equid alphaherpesvirus 1</taxon>
    </lineage>
</organism>
<gene>
    <name evidence="1" type="primary">HELI</name>
    <name type="ordered locus">57</name>
</gene>